<accession>Q5HWN6</accession>
<feature type="chain" id="PRO_0000112603" description="Acetylglutamate kinase">
    <location>
        <begin position="1"/>
        <end position="279"/>
    </location>
</feature>
<feature type="binding site" evidence="1">
    <location>
        <begin position="64"/>
        <end position="65"/>
    </location>
    <ligand>
        <name>substrate</name>
    </ligand>
</feature>
<feature type="binding site" evidence="1">
    <location>
        <position position="86"/>
    </location>
    <ligand>
        <name>substrate</name>
    </ligand>
</feature>
<feature type="binding site" evidence="1">
    <location>
        <position position="177"/>
    </location>
    <ligand>
        <name>substrate</name>
    </ligand>
</feature>
<feature type="site" description="Transition state stabilizer" evidence="1">
    <location>
        <position position="29"/>
    </location>
</feature>
<feature type="site" description="Transition state stabilizer" evidence="1">
    <location>
        <position position="238"/>
    </location>
</feature>
<proteinExistence type="inferred from homology"/>
<protein>
    <recommendedName>
        <fullName evidence="1">Acetylglutamate kinase</fullName>
        <ecNumber evidence="1">2.7.2.8</ecNumber>
    </recommendedName>
    <alternativeName>
        <fullName evidence="1">N-acetyl-L-glutamate 5-phosphotransferase</fullName>
    </alternativeName>
    <alternativeName>
        <fullName evidence="1">NAG kinase</fullName>
        <shortName evidence="1">NAGK</shortName>
    </alternativeName>
</protein>
<keyword id="KW-0028">Amino-acid biosynthesis</keyword>
<keyword id="KW-0055">Arginine biosynthesis</keyword>
<keyword id="KW-0067">ATP-binding</keyword>
<keyword id="KW-0963">Cytoplasm</keyword>
<keyword id="KW-0418">Kinase</keyword>
<keyword id="KW-0547">Nucleotide-binding</keyword>
<keyword id="KW-0808">Transferase</keyword>
<sequence length="279" mass="30535">MQKYLEKANVLIEALPYIRKFNSKIILIKYGGSAMENEELKHCVMQDIALLKLVGLKPIIVHGGGKDISAMCEKLGVKSEFKNGLRVSDKATTEVASMVLNHINKNLVHSLQNLGVKAIGLCGKDGALLECVKKDENLAFVGTIQKVNSKILEELLEKDFLPIIAPIGMDENFNTYNINADDVACAIAKALRAEKLAFLTDTAGLYEDFNDKNSLISKISLEQAKILAPKIEGGMHVKLKSCIDACENGVKKVHILDGRVKHSLLLEFFTDEGIGTLVG</sequence>
<evidence type="ECO:0000255" key="1">
    <source>
        <dbReference type="HAMAP-Rule" id="MF_00082"/>
    </source>
</evidence>
<dbReference type="EC" id="2.7.2.8" evidence="1"/>
<dbReference type="EMBL" id="CP000025">
    <property type="protein sequence ID" value="AAW34869.1"/>
    <property type="molecule type" value="Genomic_DNA"/>
</dbReference>
<dbReference type="SMR" id="Q5HWN6"/>
<dbReference type="KEGG" id="cjr:CJE0277"/>
<dbReference type="HOGENOM" id="CLU_053680_0_0_7"/>
<dbReference type="UniPathway" id="UPA00068">
    <property type="reaction ID" value="UER00107"/>
</dbReference>
<dbReference type="GO" id="GO:0005737">
    <property type="term" value="C:cytoplasm"/>
    <property type="evidence" value="ECO:0007669"/>
    <property type="project" value="UniProtKB-SubCell"/>
</dbReference>
<dbReference type="GO" id="GO:0003991">
    <property type="term" value="F:acetylglutamate kinase activity"/>
    <property type="evidence" value="ECO:0007669"/>
    <property type="project" value="UniProtKB-UniRule"/>
</dbReference>
<dbReference type="GO" id="GO:0005524">
    <property type="term" value="F:ATP binding"/>
    <property type="evidence" value="ECO:0007669"/>
    <property type="project" value="UniProtKB-UniRule"/>
</dbReference>
<dbReference type="GO" id="GO:0042450">
    <property type="term" value="P:arginine biosynthetic process via ornithine"/>
    <property type="evidence" value="ECO:0007669"/>
    <property type="project" value="UniProtKB-UniRule"/>
</dbReference>
<dbReference type="GO" id="GO:0006526">
    <property type="term" value="P:L-arginine biosynthetic process"/>
    <property type="evidence" value="ECO:0007669"/>
    <property type="project" value="UniProtKB-UniPathway"/>
</dbReference>
<dbReference type="CDD" id="cd04250">
    <property type="entry name" value="AAK_NAGK-C"/>
    <property type="match status" value="1"/>
</dbReference>
<dbReference type="FunFam" id="3.40.1160.10:FF:000004">
    <property type="entry name" value="Acetylglutamate kinase"/>
    <property type="match status" value="1"/>
</dbReference>
<dbReference type="Gene3D" id="3.40.1160.10">
    <property type="entry name" value="Acetylglutamate kinase-like"/>
    <property type="match status" value="1"/>
</dbReference>
<dbReference type="HAMAP" id="MF_00082">
    <property type="entry name" value="ArgB"/>
    <property type="match status" value="1"/>
</dbReference>
<dbReference type="InterPro" id="IPR036393">
    <property type="entry name" value="AceGlu_kinase-like_sf"/>
</dbReference>
<dbReference type="InterPro" id="IPR004662">
    <property type="entry name" value="AcgluKinase_fam"/>
</dbReference>
<dbReference type="InterPro" id="IPR037528">
    <property type="entry name" value="ArgB"/>
</dbReference>
<dbReference type="InterPro" id="IPR001048">
    <property type="entry name" value="Asp/Glu/Uridylate_kinase"/>
</dbReference>
<dbReference type="InterPro" id="IPR001057">
    <property type="entry name" value="Glu/AcGlu_kinase"/>
</dbReference>
<dbReference type="InterPro" id="IPR041727">
    <property type="entry name" value="NAGK-C"/>
</dbReference>
<dbReference type="NCBIfam" id="TIGR00761">
    <property type="entry name" value="argB"/>
    <property type="match status" value="1"/>
</dbReference>
<dbReference type="PANTHER" id="PTHR23342">
    <property type="entry name" value="N-ACETYLGLUTAMATE SYNTHASE"/>
    <property type="match status" value="1"/>
</dbReference>
<dbReference type="PANTHER" id="PTHR23342:SF0">
    <property type="entry name" value="N-ACETYLGLUTAMATE SYNTHASE, MITOCHONDRIAL"/>
    <property type="match status" value="1"/>
</dbReference>
<dbReference type="Pfam" id="PF00696">
    <property type="entry name" value="AA_kinase"/>
    <property type="match status" value="1"/>
</dbReference>
<dbReference type="PIRSF" id="PIRSF000728">
    <property type="entry name" value="NAGK"/>
    <property type="match status" value="1"/>
</dbReference>
<dbReference type="PRINTS" id="PR00474">
    <property type="entry name" value="GLU5KINASE"/>
</dbReference>
<dbReference type="SUPFAM" id="SSF53633">
    <property type="entry name" value="Carbamate kinase-like"/>
    <property type="match status" value="1"/>
</dbReference>
<name>ARGB_CAMJR</name>
<gene>
    <name evidence="1" type="primary">argB</name>
    <name type="ordered locus">CJE0277</name>
</gene>
<organism>
    <name type="scientific">Campylobacter jejuni (strain RM1221)</name>
    <dbReference type="NCBI Taxonomy" id="195099"/>
    <lineage>
        <taxon>Bacteria</taxon>
        <taxon>Pseudomonadati</taxon>
        <taxon>Campylobacterota</taxon>
        <taxon>Epsilonproteobacteria</taxon>
        <taxon>Campylobacterales</taxon>
        <taxon>Campylobacteraceae</taxon>
        <taxon>Campylobacter</taxon>
    </lineage>
</organism>
<reference key="1">
    <citation type="journal article" date="2005" name="PLoS Biol.">
        <title>Major structural differences and novel potential virulence mechanisms from the genomes of multiple Campylobacter species.</title>
        <authorList>
            <person name="Fouts D.E."/>
            <person name="Mongodin E.F."/>
            <person name="Mandrell R.E."/>
            <person name="Miller W.G."/>
            <person name="Rasko D.A."/>
            <person name="Ravel J."/>
            <person name="Brinkac L.M."/>
            <person name="DeBoy R.T."/>
            <person name="Parker C.T."/>
            <person name="Daugherty S.C."/>
            <person name="Dodson R.J."/>
            <person name="Durkin A.S."/>
            <person name="Madupu R."/>
            <person name="Sullivan S.A."/>
            <person name="Shetty J.U."/>
            <person name="Ayodeji M.A."/>
            <person name="Shvartsbeyn A."/>
            <person name="Schatz M.C."/>
            <person name="Badger J.H."/>
            <person name="Fraser C.M."/>
            <person name="Nelson K.E."/>
        </authorList>
    </citation>
    <scope>NUCLEOTIDE SEQUENCE [LARGE SCALE GENOMIC DNA]</scope>
    <source>
        <strain>RM1221</strain>
    </source>
</reference>
<comment type="function">
    <text evidence="1">Catalyzes the ATP-dependent phosphorylation of N-acetyl-L-glutamate.</text>
</comment>
<comment type="catalytic activity">
    <reaction evidence="1">
        <text>N-acetyl-L-glutamate + ATP = N-acetyl-L-glutamyl 5-phosphate + ADP</text>
        <dbReference type="Rhea" id="RHEA:14629"/>
        <dbReference type="ChEBI" id="CHEBI:30616"/>
        <dbReference type="ChEBI" id="CHEBI:44337"/>
        <dbReference type="ChEBI" id="CHEBI:57936"/>
        <dbReference type="ChEBI" id="CHEBI:456216"/>
        <dbReference type="EC" id="2.7.2.8"/>
    </reaction>
</comment>
<comment type="pathway">
    <text evidence="1">Amino-acid biosynthesis; L-arginine biosynthesis; N(2)-acetyl-L-ornithine from L-glutamate: step 2/4.</text>
</comment>
<comment type="subcellular location">
    <subcellularLocation>
        <location evidence="1">Cytoplasm</location>
    </subcellularLocation>
</comment>
<comment type="similarity">
    <text evidence="1">Belongs to the acetylglutamate kinase family. ArgB subfamily.</text>
</comment>